<reference key="1">
    <citation type="journal article" date="2002" name="Science">
        <title>The genome sequence of the malaria mosquito Anopheles gambiae.</title>
        <authorList>
            <person name="Holt R.A."/>
            <person name="Subramanian G.M."/>
            <person name="Halpern A."/>
            <person name="Sutton G.G."/>
            <person name="Charlab R."/>
            <person name="Nusskern D.R."/>
            <person name="Wincker P."/>
            <person name="Clark A.G."/>
            <person name="Ribeiro J.M.C."/>
            <person name="Wides R."/>
            <person name="Salzberg S.L."/>
            <person name="Loftus B.J."/>
            <person name="Yandell M.D."/>
            <person name="Majoros W.H."/>
            <person name="Rusch D.B."/>
            <person name="Lai Z."/>
            <person name="Kraft C.L."/>
            <person name="Abril J.F."/>
            <person name="Anthouard V."/>
            <person name="Arensburger P."/>
            <person name="Atkinson P.W."/>
            <person name="Baden H."/>
            <person name="de Berardinis V."/>
            <person name="Baldwin D."/>
            <person name="Benes V."/>
            <person name="Biedler J."/>
            <person name="Blass C."/>
            <person name="Bolanos R."/>
            <person name="Boscus D."/>
            <person name="Barnstead M."/>
            <person name="Cai S."/>
            <person name="Center A."/>
            <person name="Chaturverdi K."/>
            <person name="Christophides G.K."/>
            <person name="Chrystal M.A.M."/>
            <person name="Clamp M."/>
            <person name="Cravchik A."/>
            <person name="Curwen V."/>
            <person name="Dana A."/>
            <person name="Delcher A."/>
            <person name="Dew I."/>
            <person name="Evans C.A."/>
            <person name="Flanigan M."/>
            <person name="Grundschober-Freimoser A."/>
            <person name="Friedli L."/>
            <person name="Gu Z."/>
            <person name="Guan P."/>
            <person name="Guigo R."/>
            <person name="Hillenmeyer M.E."/>
            <person name="Hladun S.L."/>
            <person name="Hogan J.R."/>
            <person name="Hong Y.S."/>
            <person name="Hoover J."/>
            <person name="Jaillon O."/>
            <person name="Ke Z."/>
            <person name="Kodira C.D."/>
            <person name="Kokoza E."/>
            <person name="Koutsos A."/>
            <person name="Letunic I."/>
            <person name="Levitsky A.A."/>
            <person name="Liang Y."/>
            <person name="Lin J.-J."/>
            <person name="Lobo N.F."/>
            <person name="Lopez J.R."/>
            <person name="Malek J.A."/>
            <person name="McIntosh T.C."/>
            <person name="Meister S."/>
            <person name="Miller J.R."/>
            <person name="Mobarry C."/>
            <person name="Mongin E."/>
            <person name="Murphy S.D."/>
            <person name="O'Brochta D.A."/>
            <person name="Pfannkoch C."/>
            <person name="Qi R."/>
            <person name="Regier M.A."/>
            <person name="Remington K."/>
            <person name="Shao H."/>
            <person name="Sharakhova M.V."/>
            <person name="Sitter C.D."/>
            <person name="Shetty J."/>
            <person name="Smith T.J."/>
            <person name="Strong R."/>
            <person name="Sun J."/>
            <person name="Thomasova D."/>
            <person name="Ton L.Q."/>
            <person name="Topalis P."/>
            <person name="Tu Z.J."/>
            <person name="Unger M.F."/>
            <person name="Walenz B."/>
            <person name="Wang A.H."/>
            <person name="Wang J."/>
            <person name="Wang M."/>
            <person name="Wang X."/>
            <person name="Woodford K.J."/>
            <person name="Wortman J.R."/>
            <person name="Wu M."/>
            <person name="Yao A."/>
            <person name="Zdobnov E.M."/>
            <person name="Zhang H."/>
            <person name="Zhao Q."/>
            <person name="Zhao S."/>
            <person name="Zhu S.C."/>
            <person name="Zhimulev I."/>
            <person name="Coluzzi M."/>
            <person name="della Torre A."/>
            <person name="Roth C.W."/>
            <person name="Louis C."/>
            <person name="Kalush F."/>
            <person name="Mural R.J."/>
            <person name="Myers E.W."/>
            <person name="Adams M.D."/>
            <person name="Smith H.O."/>
            <person name="Broder S."/>
            <person name="Gardner M.J."/>
            <person name="Fraser C.M."/>
            <person name="Birney E."/>
            <person name="Bork P."/>
            <person name="Brey P.T."/>
            <person name="Venter J.C."/>
            <person name="Weissenbach J."/>
            <person name="Kafatos F.C."/>
            <person name="Collins F.H."/>
            <person name="Hoffman S.L."/>
        </authorList>
    </citation>
    <scope>NUCLEOTIDE SEQUENCE [LARGE SCALE GENOMIC DNA]</scope>
    <source>
        <strain>PEST</strain>
    </source>
</reference>
<sequence>MPEYMINGIPVNFPFEPYELQKNYMAKVIECLQNKTNGVLESPTGTGKTLSLLCSSMAWLLHMKSKQPKHRMETIDTLPEPPELSNAKHAALDPEQALALQQQKANAKMKIIYASRTHSQLSQAMQELKNTSYLFVRSIILGSRDQLCIHPDISKQENNAIKTVLCRESVKARNCSFYNRVETAKDRPDVATVPVMDIEDLVTVGRKLKACPYYLSKELVEQADVIFMPYNYLLDPKARKSNGLSLQNTVIILDEAHNVEKMCEEVGSALLRSSDIALAIEDTSSVIKSMMDGGGAWTGDGEKQLELTLDDLVLLKEILLGVEKAVDDIPILFSQGGTTHPGTYIFDLLEKANIKFGNINVVLQVMNSLITHITTEKTGGFVRRGAGLQSMVDFLEVVFASSGPEYRQAVEKCFRVHIEPEEPKQLAKGGVKRADGWTATKQPLKAPVKSTSKVINFWCFNPGFGMRQLVDSGTRSIILTSGTLAPLKPFISELSLPVAVSLENPHIIARSQVYVKVITHGPDRVELNSSFKNRSNPEYIASLGRTALSLCPIIPGGLLIFFPSYPLLNKCSEEWQASGIWGQISRLKQIFVEPRGKDQFTTTMAEYYAQVRDPASRGAIFMAVCRGKVSEGLDFADANGRAVMITGLPFPPMMDARVVLKKQYLDTNRTRENELITGNDWYSLEASRAVNQAIGRVIRHKDDYGAILLCDSRFQNARQQAQLSAWIHSHLRESSAVPNFGTVVGEMSRFFRHMSTASLPARVRDVCAVKDEPAEAAKEEPGKGKRFATAVKGGGINTFAEKFRLSEYLPDSMKVNPHSRSTKSAGDDAEAGGSGLVTLYKRERNDGKGPPPSPGAFEATRKRRKIVIVPQPLVKREDTEDGENVLLPVKQEPDVAAAANVKRVAPENRVDFLREVKCSLSAGSYKTFLQSLAVYNRNSDFVLFIKQLCSCFNKPHLHYLLLAMRRFIKQEHTLEFDTIIEKIEARFFSDM</sequence>
<feature type="chain" id="PRO_0000370618" description="Regulator of telomere elongation helicase 1 homolog">
    <location>
        <begin position="1"/>
        <end position="991"/>
    </location>
</feature>
<feature type="domain" description="Helicase ATP-binding" evidence="1">
    <location>
        <begin position="7"/>
        <end position="319"/>
    </location>
</feature>
<feature type="region of interest" description="Disordered" evidence="2">
    <location>
        <begin position="812"/>
        <end position="833"/>
    </location>
</feature>
<feature type="short sequence motif" description="DEAH box">
    <location>
        <begin position="254"/>
        <end position="257"/>
    </location>
</feature>
<feature type="binding site" evidence="1">
    <location>
        <begin position="42"/>
        <end position="49"/>
    </location>
    <ligand>
        <name>ATP</name>
        <dbReference type="ChEBI" id="CHEBI:30616"/>
    </ligand>
</feature>
<feature type="binding site" evidence="1">
    <location>
        <position position="148"/>
    </location>
    <ligand>
        <name>[4Fe-4S] cluster</name>
        <dbReference type="ChEBI" id="CHEBI:49883"/>
    </ligand>
</feature>
<feature type="binding site" evidence="1">
    <location>
        <position position="166"/>
    </location>
    <ligand>
        <name>[4Fe-4S] cluster</name>
        <dbReference type="ChEBI" id="CHEBI:49883"/>
    </ligand>
</feature>
<feature type="binding site" evidence="1">
    <location>
        <position position="175"/>
    </location>
    <ligand>
        <name>[4Fe-4S] cluster</name>
        <dbReference type="ChEBI" id="CHEBI:49883"/>
    </ligand>
</feature>
<feature type="binding site" evidence="1">
    <location>
        <position position="211"/>
    </location>
    <ligand>
        <name>[4Fe-4S] cluster</name>
        <dbReference type="ChEBI" id="CHEBI:49883"/>
    </ligand>
</feature>
<accession>Q7QEI1</accession>
<dbReference type="EC" id="5.6.2.-" evidence="1"/>
<dbReference type="EMBL" id="AAAB01008847">
    <property type="protein sequence ID" value="EAA06834.5"/>
    <property type="molecule type" value="Genomic_DNA"/>
</dbReference>
<dbReference type="RefSeq" id="XP_311162.5">
    <property type="nucleotide sequence ID" value="XM_311162.5"/>
</dbReference>
<dbReference type="SMR" id="Q7QEI1"/>
<dbReference type="FunCoup" id="Q7QEI1">
    <property type="interactions" value="2012"/>
</dbReference>
<dbReference type="STRING" id="7165.Q7QEI1"/>
<dbReference type="PaxDb" id="7165-AGAP000634-PA"/>
<dbReference type="EnsemblMetazoa" id="AGAP000634-RA">
    <property type="protein sequence ID" value="AGAP000634-PA"/>
    <property type="gene ID" value="AGAP000634"/>
</dbReference>
<dbReference type="GeneID" id="1272449"/>
<dbReference type="KEGG" id="aga:1272449"/>
<dbReference type="CTD" id="51750"/>
<dbReference type="VEuPathDB" id="VectorBase:AGAMI1_012118"/>
<dbReference type="VEuPathDB" id="VectorBase:AGAP000634"/>
<dbReference type="eggNOG" id="KOG1132">
    <property type="taxonomic scope" value="Eukaryota"/>
</dbReference>
<dbReference type="HOGENOM" id="CLU_006515_4_0_1"/>
<dbReference type="InParanoid" id="Q7QEI1"/>
<dbReference type="OMA" id="NCATIVA"/>
<dbReference type="OrthoDB" id="19182at2759"/>
<dbReference type="PhylomeDB" id="Q7QEI1"/>
<dbReference type="Proteomes" id="UP000007062">
    <property type="component" value="Chromosome X"/>
</dbReference>
<dbReference type="GO" id="GO:0005634">
    <property type="term" value="C:nucleus"/>
    <property type="evidence" value="ECO:0000250"/>
    <property type="project" value="UniProtKB"/>
</dbReference>
<dbReference type="GO" id="GO:0051539">
    <property type="term" value="F:4 iron, 4 sulfur cluster binding"/>
    <property type="evidence" value="ECO:0007669"/>
    <property type="project" value="UniProtKB-UniRule"/>
</dbReference>
<dbReference type="GO" id="GO:0005524">
    <property type="term" value="F:ATP binding"/>
    <property type="evidence" value="ECO:0000250"/>
    <property type="project" value="UniProtKB"/>
</dbReference>
<dbReference type="GO" id="GO:0016887">
    <property type="term" value="F:ATP hydrolysis activity"/>
    <property type="evidence" value="ECO:0007669"/>
    <property type="project" value="RHEA"/>
</dbReference>
<dbReference type="GO" id="GO:0003677">
    <property type="term" value="F:DNA binding"/>
    <property type="evidence" value="ECO:0007669"/>
    <property type="project" value="UniProtKB-UniRule"/>
</dbReference>
<dbReference type="GO" id="GO:0003678">
    <property type="term" value="F:DNA helicase activity"/>
    <property type="evidence" value="ECO:0000250"/>
    <property type="project" value="UniProtKB"/>
</dbReference>
<dbReference type="GO" id="GO:0070182">
    <property type="term" value="F:DNA polymerase binding"/>
    <property type="evidence" value="ECO:0000318"/>
    <property type="project" value="GO_Central"/>
</dbReference>
<dbReference type="GO" id="GO:0046872">
    <property type="term" value="F:metal ion binding"/>
    <property type="evidence" value="ECO:0007669"/>
    <property type="project" value="UniProtKB-UniRule"/>
</dbReference>
<dbReference type="GO" id="GO:0006310">
    <property type="term" value="P:DNA recombination"/>
    <property type="evidence" value="ECO:0007669"/>
    <property type="project" value="InterPro"/>
</dbReference>
<dbReference type="GO" id="GO:0006281">
    <property type="term" value="P:DNA repair"/>
    <property type="evidence" value="ECO:0007669"/>
    <property type="project" value="UniProtKB-UniRule"/>
</dbReference>
<dbReference type="GO" id="GO:0006260">
    <property type="term" value="P:DNA replication"/>
    <property type="evidence" value="ECO:0007669"/>
    <property type="project" value="InterPro"/>
</dbReference>
<dbReference type="GO" id="GO:0045910">
    <property type="term" value="P:negative regulation of DNA recombination"/>
    <property type="evidence" value="ECO:0000318"/>
    <property type="project" value="GO_Central"/>
</dbReference>
<dbReference type="GO" id="GO:1904430">
    <property type="term" value="P:negative regulation of t-circle formation"/>
    <property type="evidence" value="ECO:0000318"/>
    <property type="project" value="GO_Central"/>
</dbReference>
<dbReference type="GO" id="GO:0010569">
    <property type="term" value="P:regulation of double-strand break repair via homologous recombination"/>
    <property type="evidence" value="ECO:0000250"/>
    <property type="project" value="UniProtKB"/>
</dbReference>
<dbReference type="GO" id="GO:0090657">
    <property type="term" value="P:telomeric loop disassembly"/>
    <property type="evidence" value="ECO:0000318"/>
    <property type="project" value="GO_Central"/>
</dbReference>
<dbReference type="CDD" id="cd17970">
    <property type="entry name" value="DEAHc_FancJ"/>
    <property type="match status" value="1"/>
</dbReference>
<dbReference type="CDD" id="cd13932">
    <property type="entry name" value="HN_RTEL1"/>
    <property type="match status" value="1"/>
</dbReference>
<dbReference type="CDD" id="cd18788">
    <property type="entry name" value="SF2_C_XPD"/>
    <property type="match status" value="1"/>
</dbReference>
<dbReference type="FunFam" id="3.40.50.300:FF:000431">
    <property type="entry name" value="Regulator of telomere elongation helicase 1"/>
    <property type="match status" value="1"/>
</dbReference>
<dbReference type="FunFam" id="3.40.50.300:FF:000691">
    <property type="entry name" value="Regulator of telomere elongation helicase 1"/>
    <property type="match status" value="1"/>
</dbReference>
<dbReference type="Gene3D" id="1.20.1160.20">
    <property type="match status" value="1"/>
</dbReference>
<dbReference type="Gene3D" id="3.40.50.300">
    <property type="entry name" value="P-loop containing nucleotide triphosphate hydrolases"/>
    <property type="match status" value="2"/>
</dbReference>
<dbReference type="HAMAP" id="MF_03065">
    <property type="entry name" value="RTEL1"/>
    <property type="match status" value="1"/>
</dbReference>
<dbReference type="InterPro" id="IPR006555">
    <property type="entry name" value="ATP-dep_Helicase_C"/>
</dbReference>
<dbReference type="InterPro" id="IPR045028">
    <property type="entry name" value="DinG/Rad3-like"/>
</dbReference>
<dbReference type="InterPro" id="IPR014013">
    <property type="entry name" value="Helic_SF1/SF2_ATP-bd_DinG/Rad3"/>
</dbReference>
<dbReference type="InterPro" id="IPR006554">
    <property type="entry name" value="Helicase-like_DEXD_c2"/>
</dbReference>
<dbReference type="InterPro" id="IPR049909">
    <property type="entry name" value="HHD_RTEL1"/>
</dbReference>
<dbReference type="InterPro" id="IPR027417">
    <property type="entry name" value="P-loop_NTPase"/>
</dbReference>
<dbReference type="InterPro" id="IPR010614">
    <property type="entry name" value="RAD3-like_helicase_DEAD"/>
</dbReference>
<dbReference type="InterPro" id="IPR013020">
    <property type="entry name" value="Rad3/Chl1-like"/>
</dbReference>
<dbReference type="InterPro" id="IPR030845">
    <property type="entry name" value="RTEL1"/>
</dbReference>
<dbReference type="NCBIfam" id="TIGR00604">
    <property type="entry name" value="rad3"/>
    <property type="match status" value="1"/>
</dbReference>
<dbReference type="PANTHER" id="PTHR11472">
    <property type="entry name" value="DNA REPAIR DEAD HELICASE RAD3/XP-D SUBFAMILY MEMBER"/>
    <property type="match status" value="1"/>
</dbReference>
<dbReference type="PANTHER" id="PTHR11472:SF34">
    <property type="entry name" value="REGULATOR OF TELOMERE ELONGATION HELICASE 1"/>
    <property type="match status" value="1"/>
</dbReference>
<dbReference type="Pfam" id="PF23109">
    <property type="entry name" value="ARCH_RTEL1"/>
    <property type="match status" value="1"/>
</dbReference>
<dbReference type="Pfam" id="PF06733">
    <property type="entry name" value="DEAD_2"/>
    <property type="match status" value="1"/>
</dbReference>
<dbReference type="Pfam" id="PF13307">
    <property type="entry name" value="Helicase_C_2"/>
    <property type="match status" value="1"/>
</dbReference>
<dbReference type="SMART" id="SM00488">
    <property type="entry name" value="DEXDc2"/>
    <property type="match status" value="1"/>
</dbReference>
<dbReference type="SMART" id="SM00491">
    <property type="entry name" value="HELICc2"/>
    <property type="match status" value="1"/>
</dbReference>
<dbReference type="SUPFAM" id="SSF52540">
    <property type="entry name" value="P-loop containing nucleoside triphosphate hydrolases"/>
    <property type="match status" value="1"/>
</dbReference>
<dbReference type="PROSITE" id="PS51193">
    <property type="entry name" value="HELICASE_ATP_BIND_2"/>
    <property type="match status" value="1"/>
</dbReference>
<evidence type="ECO:0000255" key="1">
    <source>
        <dbReference type="HAMAP-Rule" id="MF_03065"/>
    </source>
</evidence>
<evidence type="ECO:0000256" key="2">
    <source>
        <dbReference type="SAM" id="MobiDB-lite"/>
    </source>
</evidence>
<keyword id="KW-0004">4Fe-4S</keyword>
<keyword id="KW-0067">ATP-binding</keyword>
<keyword id="KW-0227">DNA damage</keyword>
<keyword id="KW-0234">DNA repair</keyword>
<keyword id="KW-0238">DNA-binding</keyword>
<keyword id="KW-0347">Helicase</keyword>
<keyword id="KW-0378">Hydrolase</keyword>
<keyword id="KW-0408">Iron</keyword>
<keyword id="KW-0411">Iron-sulfur</keyword>
<keyword id="KW-0413">Isomerase</keyword>
<keyword id="KW-0479">Metal-binding</keyword>
<keyword id="KW-0547">Nucleotide-binding</keyword>
<keyword id="KW-0539">Nucleus</keyword>
<keyword id="KW-1185">Reference proteome</keyword>
<protein>
    <recommendedName>
        <fullName evidence="1">Regulator of telomere elongation helicase 1 homolog</fullName>
        <ecNumber evidence="1">5.6.2.-</ecNumber>
    </recommendedName>
</protein>
<comment type="function">
    <text evidence="1">A probable ATP-dependent DNA helicase implicated in DNA repair and the maintenance of genomic stability. Acts as an anti-recombinase to counteract toxic recombination and limit crossover during meiosis. Regulates meiotic recombination and crossover homeostasis by physically dissociating strand invasion events and thereby promotes noncrossover repair by meiotic synthesis dependent strand annealing (SDSA) as well as disassembly of D loop recombination intermediates.</text>
</comment>
<comment type="catalytic activity">
    <reaction evidence="1">
        <text>ATP + H2O = ADP + phosphate + H(+)</text>
        <dbReference type="Rhea" id="RHEA:13065"/>
        <dbReference type="ChEBI" id="CHEBI:15377"/>
        <dbReference type="ChEBI" id="CHEBI:15378"/>
        <dbReference type="ChEBI" id="CHEBI:30616"/>
        <dbReference type="ChEBI" id="CHEBI:43474"/>
        <dbReference type="ChEBI" id="CHEBI:456216"/>
    </reaction>
</comment>
<comment type="subcellular location">
    <subcellularLocation>
        <location evidence="1">Nucleus</location>
    </subcellularLocation>
</comment>
<comment type="similarity">
    <text evidence="1">Belongs to the helicase family. RAD3/XPD subfamily.</text>
</comment>
<gene>
    <name type="ORF">AGAP000634</name>
</gene>
<proteinExistence type="inferred from homology"/>
<name>RTEL1_ANOGA</name>
<organism>
    <name type="scientific">Anopheles gambiae</name>
    <name type="common">African malaria mosquito</name>
    <dbReference type="NCBI Taxonomy" id="7165"/>
    <lineage>
        <taxon>Eukaryota</taxon>
        <taxon>Metazoa</taxon>
        <taxon>Ecdysozoa</taxon>
        <taxon>Arthropoda</taxon>
        <taxon>Hexapoda</taxon>
        <taxon>Insecta</taxon>
        <taxon>Pterygota</taxon>
        <taxon>Neoptera</taxon>
        <taxon>Endopterygota</taxon>
        <taxon>Diptera</taxon>
        <taxon>Nematocera</taxon>
        <taxon>Culicoidea</taxon>
        <taxon>Culicidae</taxon>
        <taxon>Anophelinae</taxon>
        <taxon>Anopheles</taxon>
    </lineage>
</organism>